<dbReference type="EMBL" id="AF527630">
    <property type="protein sequence ID" value="AAN28331.1"/>
    <property type="molecule type" value="mRNA"/>
</dbReference>
<dbReference type="EMBL" id="AK088380">
    <property type="protein sequence ID" value="BAC40316.1"/>
    <property type="molecule type" value="mRNA"/>
</dbReference>
<dbReference type="EMBL" id="AK135941">
    <property type="protein sequence ID" value="BAE22733.1"/>
    <property type="molecule type" value="mRNA"/>
</dbReference>
<dbReference type="EMBL" id="AK139913">
    <property type="protein sequence ID" value="BAE24179.1"/>
    <property type="molecule type" value="mRNA"/>
</dbReference>
<dbReference type="EMBL" id="AK151186">
    <property type="protein sequence ID" value="BAE30185.1"/>
    <property type="molecule type" value="mRNA"/>
</dbReference>
<dbReference type="EMBL" id="BC132167">
    <property type="protein sequence ID" value="AAI32168.1"/>
    <property type="molecule type" value="mRNA"/>
</dbReference>
<dbReference type="EMBL" id="BC132499">
    <property type="protein sequence ID" value="AAI32500.1"/>
    <property type="molecule type" value="mRNA"/>
</dbReference>
<dbReference type="CCDS" id="CCDS19142.1"/>
<dbReference type="RefSeq" id="NP_705746.1">
    <property type="nucleotide sequence ID" value="NM_153526.5"/>
</dbReference>
<dbReference type="SMR" id="Q8BGI3"/>
<dbReference type="FunCoup" id="Q8BGI3">
    <property type="interactions" value="440"/>
</dbReference>
<dbReference type="STRING" id="10090.ENSMUSP00000061877"/>
<dbReference type="PhosphoSitePlus" id="Q8BGI3"/>
<dbReference type="PaxDb" id="10090-ENSMUSP00000061877"/>
<dbReference type="ProteomicsDB" id="269228"/>
<dbReference type="Antibodypedia" id="33108">
    <property type="antibodies" value="215 antibodies from 22 providers"/>
</dbReference>
<dbReference type="DNASU" id="231070"/>
<dbReference type="Ensembl" id="ENSMUST00000059155.11">
    <property type="protein sequence ID" value="ENSMUSP00000061877.11"/>
    <property type="gene ID" value="ENSMUSG00000045294.12"/>
</dbReference>
<dbReference type="GeneID" id="231070"/>
<dbReference type="KEGG" id="mmu:231070"/>
<dbReference type="UCSC" id="uc012dtq.1">
    <property type="organism name" value="mouse"/>
</dbReference>
<dbReference type="AGR" id="MGI:1916289"/>
<dbReference type="CTD" id="3638"/>
<dbReference type="MGI" id="MGI:1916289">
    <property type="gene designation" value="Insig1"/>
</dbReference>
<dbReference type="VEuPathDB" id="HostDB:ENSMUSG00000045294"/>
<dbReference type="eggNOG" id="KOG4363">
    <property type="taxonomic scope" value="Eukaryota"/>
</dbReference>
<dbReference type="GeneTree" id="ENSGT00580000081600"/>
<dbReference type="HOGENOM" id="CLU_092922_0_0_1"/>
<dbReference type="InParanoid" id="Q8BGI3"/>
<dbReference type="OMA" id="ENHTWSC"/>
<dbReference type="OrthoDB" id="205546at2759"/>
<dbReference type="PhylomeDB" id="Q8BGI3"/>
<dbReference type="TreeFam" id="TF331013"/>
<dbReference type="BioGRID-ORCS" id="231070">
    <property type="hits" value="4 hits in 79 CRISPR screens"/>
</dbReference>
<dbReference type="ChiTaRS" id="Insig1">
    <property type="organism name" value="mouse"/>
</dbReference>
<dbReference type="PRO" id="PR:Q8BGI3"/>
<dbReference type="Proteomes" id="UP000000589">
    <property type="component" value="Chromosome 5"/>
</dbReference>
<dbReference type="RNAct" id="Q8BGI3">
    <property type="molecule type" value="protein"/>
</dbReference>
<dbReference type="Bgee" id="ENSMUSG00000045294">
    <property type="expression patterns" value="Expressed in epithelium of small intestine and 238 other cell types or tissues"/>
</dbReference>
<dbReference type="GO" id="GO:0005783">
    <property type="term" value="C:endoplasmic reticulum"/>
    <property type="evidence" value="ECO:0000304"/>
    <property type="project" value="MGI"/>
</dbReference>
<dbReference type="GO" id="GO:0032937">
    <property type="term" value="C:SREBP-SCAP-Insig complex"/>
    <property type="evidence" value="ECO:0007669"/>
    <property type="project" value="Ensembl"/>
</dbReference>
<dbReference type="GO" id="GO:0008142">
    <property type="term" value="F:oxysterol binding"/>
    <property type="evidence" value="ECO:0007669"/>
    <property type="project" value="Ensembl"/>
</dbReference>
<dbReference type="GO" id="GO:0140311">
    <property type="term" value="F:protein sequestering activity"/>
    <property type="evidence" value="ECO:0007669"/>
    <property type="project" value="Ensembl"/>
</dbReference>
<dbReference type="GO" id="GO:0006695">
    <property type="term" value="P:cholesterol biosynthetic process"/>
    <property type="evidence" value="ECO:0000316"/>
    <property type="project" value="MGI"/>
</dbReference>
<dbReference type="GO" id="GO:0042632">
    <property type="term" value="P:cholesterol homeostasis"/>
    <property type="evidence" value="ECO:0007669"/>
    <property type="project" value="Ensembl"/>
</dbReference>
<dbReference type="GO" id="GO:0008203">
    <property type="term" value="P:cholesterol metabolic process"/>
    <property type="evidence" value="ECO:0000316"/>
    <property type="project" value="MGI"/>
</dbReference>
<dbReference type="GO" id="GO:0060363">
    <property type="term" value="P:cranial suture morphogenesis"/>
    <property type="evidence" value="ECO:0000316"/>
    <property type="project" value="MGI"/>
</dbReference>
<dbReference type="GO" id="GO:0042472">
    <property type="term" value="P:inner ear morphogenesis"/>
    <property type="evidence" value="ECO:0000316"/>
    <property type="project" value="MGI"/>
</dbReference>
<dbReference type="GO" id="GO:0042474">
    <property type="term" value="P:middle ear morphogenesis"/>
    <property type="evidence" value="ECO:0000316"/>
    <property type="project" value="MGI"/>
</dbReference>
<dbReference type="GO" id="GO:1901303">
    <property type="term" value="P:negative regulation of cargo loading into COPII-coated vesicle"/>
    <property type="evidence" value="ECO:0007669"/>
    <property type="project" value="Ensembl"/>
</dbReference>
<dbReference type="GO" id="GO:0045541">
    <property type="term" value="P:negative regulation of cholesterol biosynthetic process"/>
    <property type="evidence" value="ECO:0007669"/>
    <property type="project" value="Ensembl"/>
</dbReference>
<dbReference type="GO" id="GO:0045599">
    <property type="term" value="P:negative regulation of fat cell differentiation"/>
    <property type="evidence" value="ECO:0000314"/>
    <property type="project" value="MGI"/>
</dbReference>
<dbReference type="GO" id="GO:0045717">
    <property type="term" value="P:negative regulation of fatty acid biosynthetic process"/>
    <property type="evidence" value="ECO:0000316"/>
    <property type="project" value="MGI"/>
</dbReference>
<dbReference type="GO" id="GO:0070862">
    <property type="term" value="P:negative regulation of protein exit from endoplasmic reticulum"/>
    <property type="evidence" value="ECO:0007669"/>
    <property type="project" value="Ensembl"/>
</dbReference>
<dbReference type="GO" id="GO:0010894">
    <property type="term" value="P:negative regulation of steroid biosynthetic process"/>
    <property type="evidence" value="ECO:0000316"/>
    <property type="project" value="MGI"/>
</dbReference>
<dbReference type="GO" id="GO:0006991">
    <property type="term" value="P:response to sterol depletion"/>
    <property type="evidence" value="ECO:0000314"/>
    <property type="project" value="MGI"/>
</dbReference>
<dbReference type="GO" id="GO:0060021">
    <property type="term" value="P:roof of mouth development"/>
    <property type="evidence" value="ECO:0000316"/>
    <property type="project" value="MGI"/>
</dbReference>
<dbReference type="GO" id="GO:0032933">
    <property type="term" value="P:SREBP signaling pathway"/>
    <property type="evidence" value="ECO:0007669"/>
    <property type="project" value="Ensembl"/>
</dbReference>
<dbReference type="GO" id="GO:0036316">
    <property type="term" value="P:SREBP-SCAP complex retention in endoplasmic reticulum"/>
    <property type="evidence" value="ECO:0007669"/>
    <property type="project" value="Ensembl"/>
</dbReference>
<dbReference type="GO" id="GO:0016126">
    <property type="term" value="P:sterol biosynthetic process"/>
    <property type="evidence" value="ECO:0000316"/>
    <property type="project" value="MGI"/>
</dbReference>
<dbReference type="GO" id="GO:0006641">
    <property type="term" value="P:triglyceride metabolic process"/>
    <property type="evidence" value="ECO:0000316"/>
    <property type="project" value="MGI"/>
</dbReference>
<dbReference type="InterPro" id="IPR025929">
    <property type="entry name" value="INSIG_fam"/>
</dbReference>
<dbReference type="PANTHER" id="PTHR15301">
    <property type="entry name" value="INSULIN-INDUCED GENE 1"/>
    <property type="match status" value="1"/>
</dbReference>
<dbReference type="PANTHER" id="PTHR15301:SF11">
    <property type="entry name" value="INSULIN-INDUCED GENE 1 PROTEIN"/>
    <property type="match status" value="1"/>
</dbReference>
<dbReference type="Pfam" id="PF07281">
    <property type="entry name" value="INSIG"/>
    <property type="match status" value="1"/>
</dbReference>
<gene>
    <name evidence="9 12" type="primary">Insig1</name>
</gene>
<keyword id="KW-0153">Cholesterol metabolism</keyword>
<keyword id="KW-0256">Endoplasmic reticulum</keyword>
<keyword id="KW-1017">Isopeptide bond</keyword>
<keyword id="KW-0443">Lipid metabolism</keyword>
<keyword id="KW-0446">Lipid-binding</keyword>
<keyword id="KW-0472">Membrane</keyword>
<keyword id="KW-0597">Phosphoprotein</keyword>
<keyword id="KW-1185">Reference proteome</keyword>
<keyword id="KW-0753">Steroid metabolism</keyword>
<keyword id="KW-1207">Sterol metabolism</keyword>
<keyword id="KW-0812">Transmembrane</keyword>
<keyword id="KW-1133">Transmembrane helix</keyword>
<keyword id="KW-0832">Ubl conjugation</keyword>
<name>INSI1_MOUSE</name>
<sequence>MPRLHDHVWNYPSAGAARPYSLPRGMIAAAACPQGPGVPEPEHAPRGQRAGTTGCSARPGSWHHDLVQRSLVLFSFGVVLALVLNLLQIQRNVTLFPDEVIATIFSSAWWVPPCCGTAAAVVGLLYPCIDSHLGEPHKFKREWASVMRCIAVFVGINHASAKLDFANNVQLSLTLAALSLGLWWTFDRSRSGLGLGITIAFLATLITQFLVYNGVYQYTSPDFLYIRSWLPCIFFSGGVTVGNIGRQLAMGVPEKPHSD</sequence>
<proteinExistence type="evidence at protein level"/>
<reference key="1">
    <citation type="journal article" date="2002" name="Proc. Natl. Acad. Sci. U.S.A.">
        <title>Insig-2, a second endoplasmic reticulum protein that binds SCAP and blocks export of sterol regulatory element-binding proteins.</title>
        <authorList>
            <person name="Yabe D."/>
            <person name="Brown M.S."/>
            <person name="Goldstein J.L."/>
        </authorList>
    </citation>
    <scope>NUCLEOTIDE SEQUENCE [MRNA]</scope>
    <source>
        <strain>C57BL/6J X SJL</strain>
    </source>
</reference>
<reference key="2">
    <citation type="journal article" date="2005" name="Science">
        <title>The transcriptional landscape of the mammalian genome.</title>
        <authorList>
            <person name="Carninci P."/>
            <person name="Kasukawa T."/>
            <person name="Katayama S."/>
            <person name="Gough J."/>
            <person name="Frith M.C."/>
            <person name="Maeda N."/>
            <person name="Oyama R."/>
            <person name="Ravasi T."/>
            <person name="Lenhard B."/>
            <person name="Wells C."/>
            <person name="Kodzius R."/>
            <person name="Shimokawa K."/>
            <person name="Bajic V.B."/>
            <person name="Brenner S.E."/>
            <person name="Batalov S."/>
            <person name="Forrest A.R."/>
            <person name="Zavolan M."/>
            <person name="Davis M.J."/>
            <person name="Wilming L.G."/>
            <person name="Aidinis V."/>
            <person name="Allen J.E."/>
            <person name="Ambesi-Impiombato A."/>
            <person name="Apweiler R."/>
            <person name="Aturaliya R.N."/>
            <person name="Bailey T.L."/>
            <person name="Bansal M."/>
            <person name="Baxter L."/>
            <person name="Beisel K.W."/>
            <person name="Bersano T."/>
            <person name="Bono H."/>
            <person name="Chalk A.M."/>
            <person name="Chiu K.P."/>
            <person name="Choudhary V."/>
            <person name="Christoffels A."/>
            <person name="Clutterbuck D.R."/>
            <person name="Crowe M.L."/>
            <person name="Dalla E."/>
            <person name="Dalrymple B.P."/>
            <person name="de Bono B."/>
            <person name="Della Gatta G."/>
            <person name="di Bernardo D."/>
            <person name="Down T."/>
            <person name="Engstrom P."/>
            <person name="Fagiolini M."/>
            <person name="Faulkner G."/>
            <person name="Fletcher C.F."/>
            <person name="Fukushima T."/>
            <person name="Furuno M."/>
            <person name="Futaki S."/>
            <person name="Gariboldi M."/>
            <person name="Georgii-Hemming P."/>
            <person name="Gingeras T.R."/>
            <person name="Gojobori T."/>
            <person name="Green R.E."/>
            <person name="Gustincich S."/>
            <person name="Harbers M."/>
            <person name="Hayashi Y."/>
            <person name="Hensch T.K."/>
            <person name="Hirokawa N."/>
            <person name="Hill D."/>
            <person name="Huminiecki L."/>
            <person name="Iacono M."/>
            <person name="Ikeo K."/>
            <person name="Iwama A."/>
            <person name="Ishikawa T."/>
            <person name="Jakt M."/>
            <person name="Kanapin A."/>
            <person name="Katoh M."/>
            <person name="Kawasawa Y."/>
            <person name="Kelso J."/>
            <person name="Kitamura H."/>
            <person name="Kitano H."/>
            <person name="Kollias G."/>
            <person name="Krishnan S.P."/>
            <person name="Kruger A."/>
            <person name="Kummerfeld S.K."/>
            <person name="Kurochkin I.V."/>
            <person name="Lareau L.F."/>
            <person name="Lazarevic D."/>
            <person name="Lipovich L."/>
            <person name="Liu J."/>
            <person name="Liuni S."/>
            <person name="McWilliam S."/>
            <person name="Madan Babu M."/>
            <person name="Madera M."/>
            <person name="Marchionni L."/>
            <person name="Matsuda H."/>
            <person name="Matsuzawa S."/>
            <person name="Miki H."/>
            <person name="Mignone F."/>
            <person name="Miyake S."/>
            <person name="Morris K."/>
            <person name="Mottagui-Tabar S."/>
            <person name="Mulder N."/>
            <person name="Nakano N."/>
            <person name="Nakauchi H."/>
            <person name="Ng P."/>
            <person name="Nilsson R."/>
            <person name="Nishiguchi S."/>
            <person name="Nishikawa S."/>
            <person name="Nori F."/>
            <person name="Ohara O."/>
            <person name="Okazaki Y."/>
            <person name="Orlando V."/>
            <person name="Pang K.C."/>
            <person name="Pavan W.J."/>
            <person name="Pavesi G."/>
            <person name="Pesole G."/>
            <person name="Petrovsky N."/>
            <person name="Piazza S."/>
            <person name="Reed J."/>
            <person name="Reid J.F."/>
            <person name="Ring B.Z."/>
            <person name="Ringwald M."/>
            <person name="Rost B."/>
            <person name="Ruan Y."/>
            <person name="Salzberg S.L."/>
            <person name="Sandelin A."/>
            <person name="Schneider C."/>
            <person name="Schoenbach C."/>
            <person name="Sekiguchi K."/>
            <person name="Semple C.A."/>
            <person name="Seno S."/>
            <person name="Sessa L."/>
            <person name="Sheng Y."/>
            <person name="Shibata Y."/>
            <person name="Shimada H."/>
            <person name="Shimada K."/>
            <person name="Silva D."/>
            <person name="Sinclair B."/>
            <person name="Sperling S."/>
            <person name="Stupka E."/>
            <person name="Sugiura K."/>
            <person name="Sultana R."/>
            <person name="Takenaka Y."/>
            <person name="Taki K."/>
            <person name="Tammoja K."/>
            <person name="Tan S.L."/>
            <person name="Tang S."/>
            <person name="Taylor M.S."/>
            <person name="Tegner J."/>
            <person name="Teichmann S.A."/>
            <person name="Ueda H.R."/>
            <person name="van Nimwegen E."/>
            <person name="Verardo R."/>
            <person name="Wei C.L."/>
            <person name="Yagi K."/>
            <person name="Yamanishi H."/>
            <person name="Zabarovsky E."/>
            <person name="Zhu S."/>
            <person name="Zimmer A."/>
            <person name="Hide W."/>
            <person name="Bult C."/>
            <person name="Grimmond S.M."/>
            <person name="Teasdale R.D."/>
            <person name="Liu E.T."/>
            <person name="Brusic V."/>
            <person name="Quackenbush J."/>
            <person name="Wahlestedt C."/>
            <person name="Mattick J.S."/>
            <person name="Hume D.A."/>
            <person name="Kai C."/>
            <person name="Sasaki D."/>
            <person name="Tomaru Y."/>
            <person name="Fukuda S."/>
            <person name="Kanamori-Katayama M."/>
            <person name="Suzuki M."/>
            <person name="Aoki J."/>
            <person name="Arakawa T."/>
            <person name="Iida J."/>
            <person name="Imamura K."/>
            <person name="Itoh M."/>
            <person name="Kato T."/>
            <person name="Kawaji H."/>
            <person name="Kawagashira N."/>
            <person name="Kawashima T."/>
            <person name="Kojima M."/>
            <person name="Kondo S."/>
            <person name="Konno H."/>
            <person name="Nakano K."/>
            <person name="Ninomiya N."/>
            <person name="Nishio T."/>
            <person name="Okada M."/>
            <person name="Plessy C."/>
            <person name="Shibata K."/>
            <person name="Shiraki T."/>
            <person name="Suzuki S."/>
            <person name="Tagami M."/>
            <person name="Waki K."/>
            <person name="Watahiki A."/>
            <person name="Okamura-Oho Y."/>
            <person name="Suzuki H."/>
            <person name="Kawai J."/>
            <person name="Hayashizaki Y."/>
        </authorList>
    </citation>
    <scope>NUCLEOTIDE SEQUENCE [LARGE SCALE MRNA]</scope>
    <source>
        <strain>C57BL/6J</strain>
        <strain>NOD</strain>
        <tissue>Bone marrow</tissue>
        <tissue>Egg</tissue>
        <tissue>Thymus</tissue>
    </source>
</reference>
<reference key="3">
    <citation type="journal article" date="2004" name="Genome Res.">
        <title>The status, quality, and expansion of the NIH full-length cDNA project: the Mammalian Gene Collection (MGC).</title>
        <authorList>
            <consortium name="The MGC Project Team"/>
        </authorList>
    </citation>
    <scope>NUCLEOTIDE SEQUENCE [LARGE SCALE MRNA]</scope>
    <source>
        <tissue>Brain</tissue>
    </source>
</reference>
<reference key="4">
    <citation type="journal article" date="2003" name="Proc. Natl. Acad. Sci. U.S.A.">
        <title>Insig-1 'brakes' lipogenesis in adipocytes and inhibits differentiation of preadipocytes.</title>
        <authorList>
            <person name="Li J."/>
            <person name="Takaishi K."/>
            <person name="Cook W."/>
            <person name="McCorkle S.K."/>
            <person name="Unger R.H."/>
        </authorList>
    </citation>
    <scope>INDUCTION</scope>
</reference>
<reference key="5">
    <citation type="journal article" date="2005" name="J. Clin. Invest.">
        <title>Schoenheimer effect explained--feedback regulation of cholesterol synthesis in mice mediated by Insig proteins.</title>
        <authorList>
            <person name="Engelking L.J."/>
            <person name="Liang G."/>
            <person name="Hammer R.E."/>
            <person name="Takaishi K."/>
            <person name="Kuriyama H."/>
            <person name="Evers B.M."/>
            <person name="Li W.P."/>
            <person name="Horton J.D."/>
            <person name="Goldstein J.L."/>
            <person name="Brown M.S."/>
        </authorList>
    </citation>
    <scope>FUNCTION</scope>
    <scope>DISRUPTION PHENOTYPE</scope>
</reference>
<reference key="6">
    <citation type="journal article" date="2006" name="J. Clin. Invest.">
        <title>Severe facial clefting in Insig-deficient mouse embryos caused by sterol accumulation and reversed by lovastatin.</title>
        <authorList>
            <person name="Engelking L.J."/>
            <person name="Evers B.M."/>
            <person name="Richardson J.A."/>
            <person name="Goldstein J.L."/>
            <person name="Brown M.S."/>
            <person name="Liang G."/>
        </authorList>
    </citation>
    <scope>DISRUPTION PHENOTYPE</scope>
</reference>
<reference key="7">
    <citation type="journal article" date="2015" name="Nat. Commun.">
        <title>PAQR3 modulates cholesterol homeostasis by anchoring Scap/SREBP complex to the Golgi apparatus.</title>
        <authorList>
            <person name="Xu D."/>
            <person name="Wang Z."/>
            <person name="Zhang Y."/>
            <person name="Jiang W."/>
            <person name="Pan Y."/>
            <person name="Song B.L."/>
            <person name="Chen Y."/>
        </authorList>
    </citation>
    <scope>FUNCTION</scope>
    <scope>INTERACTION WITH SCAP</scope>
</reference>
<reference key="8">
    <citation type="journal article" date="2017" name="Nat. Rev. Endocrinol.">
        <title>SREBP-regulated lipid metabolism: convergent physiology - divergent pathophysiology.</title>
        <authorList>
            <person name="Shimano H."/>
            <person name="Sato R."/>
        </authorList>
    </citation>
    <scope>REVIEW</scope>
</reference>
<evidence type="ECO:0000250" key="1">
    <source>
        <dbReference type="UniProtKB" id="A1T557"/>
    </source>
</evidence>
<evidence type="ECO:0000250" key="2">
    <source>
        <dbReference type="UniProtKB" id="O15503"/>
    </source>
</evidence>
<evidence type="ECO:0000250" key="3">
    <source>
        <dbReference type="UniProtKB" id="Q9Y5U4"/>
    </source>
</evidence>
<evidence type="ECO:0000256" key="4">
    <source>
        <dbReference type="SAM" id="MobiDB-lite"/>
    </source>
</evidence>
<evidence type="ECO:0000269" key="5">
    <source>
    </source>
</evidence>
<evidence type="ECO:0000269" key="6">
    <source>
    </source>
</evidence>
<evidence type="ECO:0000269" key="7">
    <source>
    </source>
</evidence>
<evidence type="ECO:0000269" key="8">
    <source>
    </source>
</evidence>
<evidence type="ECO:0000303" key="9">
    <source>
    </source>
</evidence>
<evidence type="ECO:0000305" key="10"/>
<evidence type="ECO:0000305" key="11">
    <source>
    </source>
</evidence>
<evidence type="ECO:0000312" key="12">
    <source>
        <dbReference type="MGI" id="MGI:1916289"/>
    </source>
</evidence>
<feature type="chain" id="PRO_0000191676" description="Insulin-induced gene 1 protein">
    <location>
        <begin position="1"/>
        <end position="259"/>
    </location>
</feature>
<feature type="topological domain" description="Cytoplasmic" evidence="2">
    <location>
        <begin position="1"/>
        <end position="66"/>
    </location>
</feature>
<feature type="transmembrane region" description="Helical; Name=1" evidence="1">
    <location>
        <begin position="67"/>
        <end position="89"/>
    </location>
</feature>
<feature type="topological domain" description="Extracellular" evidence="10">
    <location>
        <begin position="90"/>
        <end position="108"/>
    </location>
</feature>
<feature type="transmembrane region" description="Helical; Name=2" evidence="1">
    <location>
        <begin position="109"/>
        <end position="126"/>
    </location>
</feature>
<feature type="topological domain" description="Cytoplasmic" evidence="10">
    <location>
        <begin position="127"/>
        <end position="141"/>
    </location>
</feature>
<feature type="transmembrane region" description="Helical; Name=3" evidence="1">
    <location>
        <begin position="142"/>
        <end position="164"/>
    </location>
</feature>
<feature type="topological domain" description="Extracellular" evidence="10">
    <location>
        <begin position="165"/>
        <end position="167"/>
    </location>
</feature>
<feature type="transmembrane region" description="Helical; Name=4" evidence="1">
    <location>
        <begin position="168"/>
        <end position="186"/>
    </location>
</feature>
<feature type="topological domain" description="Cytoplasmic" evidence="2">
    <location>
        <begin position="187"/>
        <end position="191"/>
    </location>
</feature>
<feature type="transmembrane region" description="Helical; Name=5" evidence="1">
    <location>
        <begin position="192"/>
        <end position="213"/>
    </location>
</feature>
<feature type="topological domain" description="Extracellular" evidence="10">
    <location>
        <begin position="214"/>
        <end position="227"/>
    </location>
</feature>
<feature type="transmembrane region" description="Helical; Name=6" evidence="1">
    <location>
        <begin position="228"/>
        <end position="245"/>
    </location>
</feature>
<feature type="topological domain" description="Cytoplasmic" evidence="2">
    <location>
        <begin position="246"/>
        <end position="259"/>
    </location>
</feature>
<feature type="region of interest" description="Disordered" evidence="4">
    <location>
        <begin position="36"/>
        <end position="55"/>
    </location>
</feature>
<feature type="short sequence motif" description="KxHxx" evidence="2">
    <location>
        <begin position="253"/>
        <end position="259"/>
    </location>
</feature>
<feature type="site" description="Required for the recognition of 25-hydroxycholesterol" evidence="3">
    <location>
        <position position="153"/>
    </location>
</feature>
<feature type="modified residue" description="Phosphoserine" evidence="2">
    <location>
        <position position="189"/>
    </location>
</feature>
<feature type="cross-link" description="Glycyl lysine isopeptide (Lys-Gly) (interchain with G-Cter in ubiquitin)" evidence="2">
    <location>
        <position position="138"/>
    </location>
</feature>
<feature type="cross-link" description="Glycyl lysine isopeptide (Lys-Gly) (interchain with G-Cter in ubiquitin)" evidence="2">
    <location>
        <position position="140"/>
    </location>
</feature>
<feature type="sequence conflict" description="In Ref. 2; BAE22733." evidence="10" ref="2">
    <original>A</original>
    <variation>G</variation>
    <location>
        <position position="28"/>
    </location>
</feature>
<feature type="sequence conflict" description="In Ref. 2; BAE22733." evidence="10" ref="2">
    <original>H</original>
    <variation>Y</variation>
    <location>
        <position position="63"/>
    </location>
</feature>
<feature type="sequence conflict" description="In Ref. 2; BAE22733." evidence="10" ref="2">
    <original>I</original>
    <variation>N</variation>
    <location>
        <position position="199"/>
    </location>
</feature>
<protein>
    <recommendedName>
        <fullName evidence="9">Insulin-induced gene 1 protein</fullName>
        <shortName evidence="9">INSIG-1</shortName>
    </recommendedName>
</protein>
<comment type="function">
    <text evidence="2 6 11">Oxysterol-binding protein that mediates feedback control of cholesterol synthesis by controlling both endoplasmic reticulum to Golgi transport of SCAP and degradation of HMGCR (PubMed:16100574). Acts as a negative regulator of cholesterol biosynthesis by mediating the retention of the SCAP-SREBP complex in the endoplasmic reticulum, thereby blocking the processing of sterol regulatory element-binding proteins (SREBPs) SREBF1/SREBP1 and SREBF2/SREBP2 (Probable). Binds oxysterol, including 25-hydroxycholesterol, regulating interaction with SCAP and retention of the SCAP-SREBP complex in the endoplasmic reticulum (PubMed:16100574). In presence of oxysterol, interacts with SCAP, retaining the SCAP-SREBP complex in the endoplasmic reticulum, thereby preventing SCAP from escorting SREBF1/SREBP1 and SREBF2/SREBP2 to the Golgi (By similarity). Sterol deprivation or phosphorylation by PCK1 reduce oxysterol-binding, disrupting the interaction between INSIG1 and SCAP, thereby promoting Golgi transport of the SCAP-SREBP complex, followed by processing and nuclear translocation of SREBF1/SREBP1 and SREBF2/SREBP2 (By similarity). Also regulates cholesterol synthesis by regulating degradation of HMGCR: initiates the sterol-mediated ubiquitin-mediated endoplasmic reticulum-associated degradation (ERAD) of HMGCR via recruitment of the reductase to the ubiquitin ligases AMFR/gp78 and/or RNF139 (By similarity). Also regulates degradation of SOAT2/ACAT2 when the lipid levels are low: initiates the ubiquitin-mediated degradation of SOAT2/ACAT2 via recruitment of the ubiquitin ligases AMFR/gp78 (By similarity).</text>
</comment>
<comment type="subunit">
    <text evidence="2 8">Interacts with SCAP; interaction is direct and only takes place in the presence of sterols; it prevents interaction between SCAP and the coat protein complex II (COPII) (By similarity). Associates with the SCAP-SREBP complex (composed of SCAP and SREBF1/SREBP1 or SREBF2/SREBP2); association is mediated via its interaction with SCAP and only takes place in the presence of sterols (PubMed:26311497). Interaction with SCAP is mutually exclusive with PAQR3 (PubMed:26311497). Interacts with HMGCR (via its SSD); the interaction, accelerated by sterols, leads to the recruitment of HMGCR to AMFR/gp78 for its ubiquitination by the sterol-mediated ERAD pathway. Interacts with AMFR/gp78 (via its membrane domain); the interaction recruits HMCR at the ER membrane for its ubiquitination and degradation by the sterol-mediated ERAD pathway. Interacts with SOAT2/ACAT2; leading to promote recruitment of AMFR/gp78 and subsequent ubiquitination of SOAT2/ACAT2. Interacts with RNF139. Interacts with RNF145.</text>
</comment>
<comment type="subcellular location">
    <subcellularLocation>
        <location evidence="2">Endoplasmic reticulum membrane</location>
        <topology evidence="2">Multi-pass membrane protein</topology>
    </subcellularLocation>
</comment>
<comment type="induction">
    <text evidence="5">Up-regulated progressively in the fat tissue as they develop diet-induced obesity (PubMed:12869692). Up-regulated in differentiating preadipocytes (PubMed:12869692).</text>
</comment>
<comment type="domain">
    <text evidence="2">The KxHxx motif mediates association with the coatomer complex.</text>
</comment>
<comment type="domain">
    <text evidence="3">Binds oxysterols in a pocket within their transmembrane domains and interacts with SCAP via transmembrane domains 3 and 4.</text>
</comment>
<comment type="PTM">
    <text evidence="2">Phosphorylation at Ser-189 by PCK1 reduces binding to oxysterol, disrupting the interaction between INSIG1 and SCAP, thereby promoting nuclear translocation of SREBP proteins (SREBF1/SREBP1 or SREBF2/SREBP2) and subsequent transcription of downstream lipogenesis-related genes.</text>
</comment>
<comment type="PTM">
    <text evidence="2">Ubiquitinated by AMFR/gp78 in response to sterol deprivation, leading to its degradation: when the SCAP-SREBP complex becomes dissociated from INSIG1, INSIG1 is then ubiquitinated and degraded in proteasomes. Although ubiquitination is required for rapid INSIG1 degradation, it is not required for release of the SCAP-SREBP complex. Ubiquitinated by RNF139.</text>
</comment>
<comment type="disruption phenotype">
    <text evidence="6 7">Knockout mice with a conditional deletion of Insig1 in the liver and a germline deletion of Insig2 overaccumulate cholesterol and triglycerides in liver: despite this accumulation, levels of nuclear sterol regulatory element-binding proteins (SREBPs) are not reduced (PubMed:16100574). The amount of HMGCR is also elevated, caused by impaired degradation of the enzyme (PubMed:16100574). Knockout mice with a germline deletion of both Insig1 and Insig2 die within one day of birth (PubMed:16100574, PubMed:16955138). After 18.5 days of development, embryos lacking both Insig1 and Insig2 show defects in midline facial development, ranging from cleft palate to complete cleft face: middle and inner ear structures are abnormal, but teeth and skeletons are normal (PubMed:16955138). The livers and heads of embryos lacking both Insig1 and Insig2 overproduce sterols, causing a marked buildup of sterol intermediates (PubMed:16955138).</text>
</comment>
<comment type="similarity">
    <text evidence="10">Belongs to the INSIG family.</text>
</comment>
<organism>
    <name type="scientific">Mus musculus</name>
    <name type="common">Mouse</name>
    <dbReference type="NCBI Taxonomy" id="10090"/>
    <lineage>
        <taxon>Eukaryota</taxon>
        <taxon>Metazoa</taxon>
        <taxon>Chordata</taxon>
        <taxon>Craniata</taxon>
        <taxon>Vertebrata</taxon>
        <taxon>Euteleostomi</taxon>
        <taxon>Mammalia</taxon>
        <taxon>Eutheria</taxon>
        <taxon>Euarchontoglires</taxon>
        <taxon>Glires</taxon>
        <taxon>Rodentia</taxon>
        <taxon>Myomorpha</taxon>
        <taxon>Muroidea</taxon>
        <taxon>Muridae</taxon>
        <taxon>Murinae</taxon>
        <taxon>Mus</taxon>
        <taxon>Mus</taxon>
    </lineage>
</organism>
<accession>Q8BGI3</accession>
<accession>A2RSM6</accession>
<accession>Q3UAX9</accession>
<accession>Q3UX30</accession>